<comment type="function">
    <text>Specifies A-alpha-4 mating-type. May regulate the expression of genes specific to the homokaryotic cell type.</text>
</comment>
<comment type="subcellular location">
    <subcellularLocation>
        <location>Nucleus</location>
    </subcellularLocation>
</comment>
<comment type="developmental stage">
    <text>Expressed constitutively in homokaryons.</text>
</comment>
<comment type="similarity">
    <text evidence="2">Belongs to the TALE/M-ATYP homeobox family.</text>
</comment>
<proteinExistence type="evidence at transcript level"/>
<dbReference type="EMBL" id="M97181">
    <property type="protein sequence ID" value="AAB01372.1"/>
    <property type="molecule type" value="Genomic_DNA"/>
</dbReference>
<dbReference type="PIR" id="D37271">
    <property type="entry name" value="D37271"/>
</dbReference>
<dbReference type="SMR" id="P37938"/>
<dbReference type="VEuPathDB" id="FungiDB:SCHCODRAFT_02696654"/>
<dbReference type="GO" id="GO:0005634">
    <property type="term" value="C:nucleus"/>
    <property type="evidence" value="ECO:0007669"/>
    <property type="project" value="UniProtKB-SubCell"/>
</dbReference>
<dbReference type="GO" id="GO:0003677">
    <property type="term" value="F:DNA binding"/>
    <property type="evidence" value="ECO:0007669"/>
    <property type="project" value="UniProtKB-KW"/>
</dbReference>
<dbReference type="GO" id="GO:0006355">
    <property type="term" value="P:regulation of DNA-templated transcription"/>
    <property type="evidence" value="ECO:0007669"/>
    <property type="project" value="InterPro"/>
</dbReference>
<dbReference type="Gene3D" id="1.10.10.60">
    <property type="entry name" value="Homeodomain-like"/>
    <property type="match status" value="1"/>
</dbReference>
<dbReference type="InterPro" id="IPR008422">
    <property type="entry name" value="KN_HD"/>
</dbReference>
<dbReference type="InterPro" id="IPR024333">
    <property type="entry name" value="Mating-type_A-alpha/beta_1_N"/>
</dbReference>
<dbReference type="PANTHER" id="PTHR48209">
    <property type="entry name" value="AGL056WP"/>
    <property type="match status" value="1"/>
</dbReference>
<dbReference type="PANTHER" id="PTHR48209:SF2">
    <property type="entry name" value="FI24008P1"/>
    <property type="match status" value="1"/>
</dbReference>
<dbReference type="Pfam" id="PF05920">
    <property type="entry name" value="Homeobox_KN"/>
    <property type="match status" value="1"/>
</dbReference>
<dbReference type="Pfam" id="PF12731">
    <property type="entry name" value="Mating_N"/>
    <property type="match status" value="1"/>
</dbReference>
<evidence type="ECO:0000256" key="1">
    <source>
        <dbReference type="SAM" id="MobiDB-lite"/>
    </source>
</evidence>
<evidence type="ECO:0000305" key="2"/>
<keyword id="KW-0238">DNA-binding</keyword>
<keyword id="KW-0371">Homeobox</keyword>
<keyword id="KW-0539">Nucleus</keyword>
<keyword id="KW-0804">Transcription</keyword>
<keyword id="KW-0805">Transcription regulation</keyword>
<name>MAAZ4_SCHCO</name>
<accession>P37938</accession>
<sequence>MSLYSAEDILKWLHHAQAEFLTALAEGDDALAQFQAQWDRVRACVDCDPTLPSSTLALSHAVGISIAQIAEVMLDQEATNHTIEDELTKDLLAGLERHDASSALADEKTGAELSATPLPPYIEPCYRWLVNHLDNPYPTKAIKEELLDQARQRTSPDVAQHLALGDIDNWFIAARARMGWGDIRRRLFGGSRSLMLQSTRLMWGTEETSRDFTDGCIAKRKGAQPKREEVQPHLRSSHDVVAFKIPPKASPYFLITDSSTAACEEPLHPQSFAALQPDVEFALAHLEVNAKEMYGLEPTELADSLNSSAVDRQFATQDLVAFRAALEAATAAKQRQARREQRRAQKDRMDAQRRAEDRKCYPSPEPLSADELSGTESDEDLDDFYASDDASDDEDDDGEDLDTRPSDLMAQMCPQLVATAFSKDGSATEDEDSNSDDTDESTDDEDEDSDSENDSDSEDEEEEDEEEEEPVKIAGAKRGRNDDEEVSPLAKKPRIFSPPVRPRPQAIRVSLPSPAPSSRGSTPTSPVSPSPKAKRPAQATSLLASHPMKKREKLQEELRKAGLAPPSAPVLMGPDGVPLGTVRSRSSPSVSSPPSVSVSLPLPSRGVPSGGIKVTGDPTPWVNWDLEAHTQAPRDLTAATKSSAGCSVDAVPLPGKSRSLTRSPSISSISSACSTSSSGSDTDSLFSVTSDATDITEPDEATTADETTTQSTSASSSRDTTSQQKRMPPLSIDPRFDPALWSKYDLSPPADGRLHPSDGLRPSAFVPTKLDVRVANLAQNPARHWSASKRSPTRASHAAAPIVSYHHATGSIASPAQVAFGEGQLTSVLATGQKAGNARRRTTPVQRRVTPKAQETSEPSSLVDGILSSGLADVCREAPKPAKAPKNDRRYLERRERRLSKSSPVDSADTVRTRLAEIEQEAARLEAERQSLQRLASVGG</sequence>
<protein>
    <recommendedName>
        <fullName>Mating-type protein A-alpha Z4</fullName>
    </recommendedName>
</protein>
<organism>
    <name type="scientific">Schizophyllum commune</name>
    <name type="common">Split gill fungus</name>
    <dbReference type="NCBI Taxonomy" id="5334"/>
    <lineage>
        <taxon>Eukaryota</taxon>
        <taxon>Fungi</taxon>
        <taxon>Dikarya</taxon>
        <taxon>Basidiomycota</taxon>
        <taxon>Agaricomycotina</taxon>
        <taxon>Agaricomycetes</taxon>
        <taxon>Agaricomycetidae</taxon>
        <taxon>Agaricales</taxon>
        <taxon>Schizophyllaceae</taxon>
        <taxon>Schizophyllum</taxon>
    </lineage>
</organism>
<reference key="1">
    <citation type="journal article" date="1992" name="Proc. Natl. Acad. Sci. U.S.A.">
        <title>The A alpha mating locus of Schizophyllum commune encodes two dissimilar multiallelic homeodomain proteins.</title>
        <authorList>
            <person name="Stankis M.M."/>
            <person name="Specht C.A."/>
            <person name="Yang H."/>
            <person name="Giasson L."/>
            <person name="Ullrich R.C."/>
            <person name="Novotny C.P."/>
        </authorList>
    </citation>
    <scope>NUCLEOTIDE SEQUENCE [GENOMIC DNA]</scope>
    <source>
        <strain>ATCC 44201 / CBS 340.81 / UVM 4-40 / 4-40</strain>
    </source>
</reference>
<feature type="chain" id="PRO_0000049191" description="Mating-type protein A-alpha Z4">
    <location>
        <begin position="1"/>
        <end position="940"/>
    </location>
</feature>
<feature type="DNA-binding region" description="Homeobox; TALE-type">
    <location>
        <begin position="110"/>
        <end position="182"/>
    </location>
</feature>
<feature type="region of interest" description="Disordered" evidence="1">
    <location>
        <begin position="333"/>
        <end position="618"/>
    </location>
</feature>
<feature type="region of interest" description="Disordered" evidence="1">
    <location>
        <begin position="633"/>
        <end position="762"/>
    </location>
</feature>
<feature type="region of interest" description="Disordered" evidence="1">
    <location>
        <begin position="832"/>
        <end position="863"/>
    </location>
</feature>
<feature type="region of interest" description="Disordered" evidence="1">
    <location>
        <begin position="877"/>
        <end position="912"/>
    </location>
</feature>
<feature type="compositionally biased region" description="Basic and acidic residues" evidence="1">
    <location>
        <begin position="337"/>
        <end position="360"/>
    </location>
</feature>
<feature type="compositionally biased region" description="Acidic residues" evidence="1">
    <location>
        <begin position="376"/>
        <end position="400"/>
    </location>
</feature>
<feature type="compositionally biased region" description="Acidic residues" evidence="1">
    <location>
        <begin position="427"/>
        <end position="469"/>
    </location>
</feature>
<feature type="compositionally biased region" description="Low complexity" evidence="1">
    <location>
        <begin position="516"/>
        <end position="531"/>
    </location>
</feature>
<feature type="compositionally biased region" description="Low complexity" evidence="1">
    <location>
        <begin position="582"/>
        <end position="611"/>
    </location>
</feature>
<feature type="compositionally biased region" description="Low complexity" evidence="1">
    <location>
        <begin position="657"/>
        <end position="693"/>
    </location>
</feature>
<feature type="compositionally biased region" description="Acidic residues" evidence="1">
    <location>
        <begin position="694"/>
        <end position="703"/>
    </location>
</feature>
<feature type="compositionally biased region" description="Low complexity" evidence="1">
    <location>
        <begin position="704"/>
        <end position="724"/>
    </location>
</feature>
<feature type="compositionally biased region" description="Basic and acidic residues" evidence="1">
    <location>
        <begin position="877"/>
        <end position="896"/>
    </location>
</feature>